<keyword id="KW-1003">Cell membrane</keyword>
<keyword id="KW-0472">Membrane</keyword>
<keyword id="KW-0614">Plasmid</keyword>
<keyword id="KW-1185">Reference proteome</keyword>
<keyword id="KW-0812">Transmembrane</keyword>
<keyword id="KW-1133">Transmembrane helix</keyword>
<keyword id="KW-0813">Transport</keyword>
<sequence>MRRLLTPWRGVAAGFLLNGILLGTWASRVPAVMGHFHVAKASFGVLLLLLGLGALISFPITGRLSDSLGAVRVARMIAIPFLVSIAALGLAPTIPLLAIALFLFGMCHGSMDVAVNSWASEVEKHMGRPVMSSFHAMWSVGAVLGAAGGYIATVFQTPVYVHFLVTAVTIGGLLGPFLLLDWQSTIRTHESGAVGLVLPNSGLFLVGLIALASGLGEGTALDWSAVYLHDVVGTEESDAALGYMGFSAAMVMMRLKADSLVTRWGSATVARISGFSAVFGILLIVLGETLPLVVAGFVLMGVGYAAVLPLAFSRAAADLVVPAGKAIASVAIFAYGAMTLGPFAIGLLAEAATMRLCFFIVGLFAALVAVLAPVLKQ</sequence>
<organism>
    <name type="scientific">Sinorhizobium fredii (strain NBRC 101917 / NGR234)</name>
    <dbReference type="NCBI Taxonomy" id="394"/>
    <lineage>
        <taxon>Bacteria</taxon>
        <taxon>Pseudomonadati</taxon>
        <taxon>Pseudomonadota</taxon>
        <taxon>Alphaproteobacteria</taxon>
        <taxon>Hyphomicrobiales</taxon>
        <taxon>Rhizobiaceae</taxon>
        <taxon>Sinorhizobium/Ensifer group</taxon>
        <taxon>Sinorhizobium</taxon>
    </lineage>
</organism>
<protein>
    <recommendedName>
        <fullName>Uncharacterized transporter y4wD</fullName>
    </recommendedName>
</protein>
<evidence type="ECO:0000255" key="1"/>
<evidence type="ECO:0000305" key="2"/>
<reference key="1">
    <citation type="journal article" date="1997" name="Nature">
        <title>Molecular basis of symbiosis between Rhizobium and legumes.</title>
        <authorList>
            <person name="Freiberg C.A."/>
            <person name="Fellay R."/>
            <person name="Bairoch A."/>
            <person name="Broughton W.J."/>
            <person name="Rosenthal A."/>
            <person name="Perret X."/>
        </authorList>
    </citation>
    <scope>NUCLEOTIDE SEQUENCE [LARGE SCALE GENOMIC DNA]</scope>
    <source>
        <strain>NBRC 101917 / NGR234</strain>
    </source>
</reference>
<reference key="2">
    <citation type="journal article" date="2009" name="Appl. Environ. Microbiol.">
        <title>Rhizobium sp. strain NGR234 possesses a remarkable number of secretion systems.</title>
        <authorList>
            <person name="Schmeisser C."/>
            <person name="Liesegang H."/>
            <person name="Krysciak D."/>
            <person name="Bakkou N."/>
            <person name="Le Quere A."/>
            <person name="Wollherr A."/>
            <person name="Heinemeyer I."/>
            <person name="Morgenstern B."/>
            <person name="Pommerening-Roeser A."/>
            <person name="Flores M."/>
            <person name="Palacios R."/>
            <person name="Brenner S."/>
            <person name="Gottschalk G."/>
            <person name="Schmitz R.A."/>
            <person name="Broughton W.J."/>
            <person name="Perret X."/>
            <person name="Strittmatter A.W."/>
            <person name="Streit W.R."/>
        </authorList>
    </citation>
    <scope>NUCLEOTIDE SEQUENCE [LARGE SCALE GENOMIC DNA]</scope>
    <source>
        <strain>NBRC 101917 / NGR234</strain>
    </source>
</reference>
<name>Y4WD_SINFN</name>
<accession>P55682</accession>
<comment type="function">
    <text>Could be involved in a transport system.</text>
</comment>
<comment type="subcellular location">
    <subcellularLocation>
        <location evidence="2">Cell membrane</location>
        <topology evidence="2">Multi-pass membrane protein</topology>
    </subcellularLocation>
</comment>
<comment type="similarity">
    <text evidence="2">To R.meliloti MosC.</text>
</comment>
<feature type="chain" id="PRO_0000200955" description="Uncharacterized transporter y4wD">
    <location>
        <begin position="1"/>
        <end position="377"/>
    </location>
</feature>
<feature type="transmembrane region" description="Helical" evidence="1">
    <location>
        <begin position="4"/>
        <end position="24"/>
    </location>
</feature>
<feature type="transmembrane region" description="Helical" evidence="1">
    <location>
        <begin position="41"/>
        <end position="61"/>
    </location>
</feature>
<feature type="transmembrane region" description="Helical" evidence="1">
    <location>
        <begin position="85"/>
        <end position="105"/>
    </location>
</feature>
<feature type="transmembrane region" description="Helical" evidence="1">
    <location>
        <begin position="134"/>
        <end position="154"/>
    </location>
</feature>
<feature type="transmembrane region" description="Helical" evidence="1">
    <location>
        <begin position="159"/>
        <end position="179"/>
    </location>
</feature>
<feature type="transmembrane region" description="Helical" evidence="1">
    <location>
        <begin position="192"/>
        <end position="212"/>
    </location>
</feature>
<feature type="transmembrane region" description="Helical" evidence="1">
    <location>
        <begin position="278"/>
        <end position="298"/>
    </location>
</feature>
<feature type="transmembrane region" description="Helical" evidence="1">
    <location>
        <begin position="301"/>
        <end position="321"/>
    </location>
</feature>
<feature type="transmembrane region" description="Helical" evidence="1">
    <location>
        <begin position="327"/>
        <end position="347"/>
    </location>
</feature>
<feature type="transmembrane region" description="Helical" evidence="1">
    <location>
        <begin position="356"/>
        <end position="376"/>
    </location>
</feature>
<gene>
    <name type="ordered locus">NGR_a01010</name>
    <name type="ORF">y4wD</name>
</gene>
<dbReference type="EMBL" id="U00090">
    <property type="protein sequence ID" value="AAB91911.1"/>
    <property type="molecule type" value="Genomic_DNA"/>
</dbReference>
<dbReference type="RefSeq" id="NP_444124.1">
    <property type="nucleotide sequence ID" value="NC_000914.2"/>
</dbReference>
<dbReference type="RefSeq" id="WP_010875142.1">
    <property type="nucleotide sequence ID" value="NC_000914.2"/>
</dbReference>
<dbReference type="SMR" id="P55682"/>
<dbReference type="KEGG" id="rhi:NGR_a01010"/>
<dbReference type="PATRIC" id="fig|394.7.peg.87"/>
<dbReference type="eggNOG" id="COG0738">
    <property type="taxonomic scope" value="Bacteria"/>
</dbReference>
<dbReference type="HOGENOM" id="CLU_035309_1_0_5"/>
<dbReference type="OrthoDB" id="9810941at2"/>
<dbReference type="Proteomes" id="UP000001054">
    <property type="component" value="Plasmid pNGR234a"/>
</dbReference>
<dbReference type="GO" id="GO:0005886">
    <property type="term" value="C:plasma membrane"/>
    <property type="evidence" value="ECO:0007669"/>
    <property type="project" value="UniProtKB-SubCell"/>
</dbReference>
<dbReference type="GO" id="GO:0022857">
    <property type="term" value="F:transmembrane transporter activity"/>
    <property type="evidence" value="ECO:0007669"/>
    <property type="project" value="InterPro"/>
</dbReference>
<dbReference type="CDD" id="cd17393">
    <property type="entry name" value="MFS_MosC_like"/>
    <property type="match status" value="1"/>
</dbReference>
<dbReference type="Gene3D" id="1.20.1250.20">
    <property type="entry name" value="MFS general substrate transporter like domains"/>
    <property type="match status" value="2"/>
</dbReference>
<dbReference type="InterPro" id="IPR011701">
    <property type="entry name" value="MFS"/>
</dbReference>
<dbReference type="InterPro" id="IPR020846">
    <property type="entry name" value="MFS_dom"/>
</dbReference>
<dbReference type="InterPro" id="IPR036259">
    <property type="entry name" value="MFS_trans_sf"/>
</dbReference>
<dbReference type="InterPro" id="IPR051788">
    <property type="entry name" value="MFS_Transporter"/>
</dbReference>
<dbReference type="PANTHER" id="PTHR23514">
    <property type="entry name" value="BYPASS OF STOP CODON PROTEIN 6"/>
    <property type="match status" value="1"/>
</dbReference>
<dbReference type="PANTHER" id="PTHR23514:SF13">
    <property type="entry name" value="INNER MEMBRANE PROTEIN YBJJ"/>
    <property type="match status" value="1"/>
</dbReference>
<dbReference type="Pfam" id="PF07690">
    <property type="entry name" value="MFS_1"/>
    <property type="match status" value="1"/>
</dbReference>
<dbReference type="SUPFAM" id="SSF103473">
    <property type="entry name" value="MFS general substrate transporter"/>
    <property type="match status" value="1"/>
</dbReference>
<dbReference type="PROSITE" id="PS50850">
    <property type="entry name" value="MFS"/>
    <property type="match status" value="1"/>
</dbReference>
<geneLocation type="plasmid">
    <name>sym pNGR234a</name>
</geneLocation>
<proteinExistence type="predicted"/>